<comment type="function">
    <text evidence="1">Forms an efflux pump with AaeA. Could function as a metabolic relief valve, allowing to eliminate certain compounds when they accumulate to high levels in the cell.</text>
</comment>
<comment type="subcellular location">
    <subcellularLocation>
        <location evidence="1">Cell inner membrane</location>
        <topology evidence="1">Multi-pass membrane protein</topology>
    </subcellularLocation>
</comment>
<comment type="similarity">
    <text evidence="1">Belongs to the aromatic acid exporter ArAE (TC 2.A.85) family.</text>
</comment>
<name>AAEB_YERPS</name>
<organism>
    <name type="scientific">Yersinia pseudotuberculosis serotype I (strain IP32953)</name>
    <dbReference type="NCBI Taxonomy" id="273123"/>
    <lineage>
        <taxon>Bacteria</taxon>
        <taxon>Pseudomonadati</taxon>
        <taxon>Pseudomonadota</taxon>
        <taxon>Gammaproteobacteria</taxon>
        <taxon>Enterobacterales</taxon>
        <taxon>Yersiniaceae</taxon>
        <taxon>Yersinia</taxon>
    </lineage>
</organism>
<dbReference type="EMBL" id="BX936398">
    <property type="protein sequence ID" value="CAH22784.1"/>
    <property type="molecule type" value="Genomic_DNA"/>
</dbReference>
<dbReference type="RefSeq" id="WP_002210095.1">
    <property type="nucleotide sequence ID" value="NZ_CP009712.1"/>
</dbReference>
<dbReference type="SMR" id="Q665H2"/>
<dbReference type="GeneID" id="57975111"/>
<dbReference type="KEGG" id="ypo:BZ17_3055"/>
<dbReference type="KEGG" id="yps:YPTB3546"/>
<dbReference type="PATRIC" id="fig|273123.14.peg.3201"/>
<dbReference type="Proteomes" id="UP000001011">
    <property type="component" value="Chromosome"/>
</dbReference>
<dbReference type="GO" id="GO:0005886">
    <property type="term" value="C:plasma membrane"/>
    <property type="evidence" value="ECO:0007669"/>
    <property type="project" value="UniProtKB-SubCell"/>
</dbReference>
<dbReference type="GO" id="GO:0022857">
    <property type="term" value="F:transmembrane transporter activity"/>
    <property type="evidence" value="ECO:0007669"/>
    <property type="project" value="UniProtKB-UniRule"/>
</dbReference>
<dbReference type="GO" id="GO:0046942">
    <property type="term" value="P:carboxylic acid transport"/>
    <property type="evidence" value="ECO:0007669"/>
    <property type="project" value="InterPro"/>
</dbReference>
<dbReference type="HAMAP" id="MF_01545">
    <property type="entry name" value="AaeB"/>
    <property type="match status" value="1"/>
</dbReference>
<dbReference type="InterPro" id="IPR006726">
    <property type="entry name" value="PHBA_efflux_AaeB/fusaric-R"/>
</dbReference>
<dbReference type="InterPro" id="IPR023706">
    <property type="entry name" value="PHBA_efflux_pump_AaeB"/>
</dbReference>
<dbReference type="NCBIfam" id="NF007916">
    <property type="entry name" value="PRK10631.1"/>
    <property type="match status" value="1"/>
</dbReference>
<dbReference type="PANTHER" id="PTHR30509:SF9">
    <property type="entry name" value="MULTIDRUG RESISTANCE PROTEIN MDTO"/>
    <property type="match status" value="1"/>
</dbReference>
<dbReference type="PANTHER" id="PTHR30509">
    <property type="entry name" value="P-HYDROXYBENZOIC ACID EFFLUX PUMP SUBUNIT-RELATED"/>
    <property type="match status" value="1"/>
</dbReference>
<dbReference type="Pfam" id="PF04632">
    <property type="entry name" value="FUSC"/>
    <property type="match status" value="1"/>
</dbReference>
<reference key="1">
    <citation type="journal article" date="2004" name="Proc. Natl. Acad. Sci. U.S.A.">
        <title>Insights into the evolution of Yersinia pestis through whole-genome comparison with Yersinia pseudotuberculosis.</title>
        <authorList>
            <person name="Chain P.S.G."/>
            <person name="Carniel E."/>
            <person name="Larimer F.W."/>
            <person name="Lamerdin J."/>
            <person name="Stoutland P.O."/>
            <person name="Regala W.M."/>
            <person name="Georgescu A.M."/>
            <person name="Vergez L.M."/>
            <person name="Land M.L."/>
            <person name="Motin V.L."/>
            <person name="Brubaker R.R."/>
            <person name="Fowler J."/>
            <person name="Hinnebusch J."/>
            <person name="Marceau M."/>
            <person name="Medigue C."/>
            <person name="Simonet M."/>
            <person name="Chenal-Francisque V."/>
            <person name="Souza B."/>
            <person name="Dacheux D."/>
            <person name="Elliott J.M."/>
            <person name="Derbise A."/>
            <person name="Hauser L.J."/>
            <person name="Garcia E."/>
        </authorList>
    </citation>
    <scope>NUCLEOTIDE SEQUENCE [LARGE SCALE GENOMIC DNA]</scope>
    <source>
        <strain>IP32953</strain>
    </source>
</reference>
<accession>Q665H2</accession>
<keyword id="KW-0997">Cell inner membrane</keyword>
<keyword id="KW-1003">Cell membrane</keyword>
<keyword id="KW-0472">Membrane</keyword>
<keyword id="KW-0812">Transmembrane</keyword>
<keyword id="KW-1133">Transmembrane helix</keyword>
<keyword id="KW-0813">Transport</keyword>
<evidence type="ECO:0000255" key="1">
    <source>
        <dbReference type="HAMAP-Rule" id="MF_01545"/>
    </source>
</evidence>
<gene>
    <name evidence="1" type="primary">aaeB</name>
    <name type="ordered locus">YPTB3546</name>
</gene>
<sequence length="651" mass="72437">MTHPSFIRLRFAFKLSFAIVAALFLGFHLQLETPRWSVLTAAIVSAGPAFAAGGEPFSGAIRHRGWLRIIGTFIGCIGGLVIIVLTIRAPVLTLMLCCLWAGICTWISSLVRVENSYAFGLAGYTALIIIVTTGETPLLTPQFAVERCSEIVLGIVCAVMADLLFSPRSIKQDIDRLVDKVLVDQYRLLQLCIQPAEKSEIDRAWNELVKNTTSLNGMRSYLMMESSRWQRCNRRLQVLHTESLALITQACETYLVMSNHPEVISAELKTMLSEPAQTPAEIHQQMKKLRQFIAASHSEAIPHTISSWVGAATRYLLLSKGIQTNSSINQVEEDILAGDAPVKPISAEGHHAMINGLRTGIATAIGGLFWLWTGWTSGAGCMVMIAVVTSLAMRTPNPRRMALDFLVGVIIALPIGALYFMFIIPSTQQSMLLLCISLGVLAFIIGIEVQKRRLGSLGTLASTINIIVLSNPMIFNVRQFLDSALGQIVGCFVSLIVLLLIRDNAKDRTGRTLLNRFVYSAVSALTTNKTKRGENHLPALYQQLNQLLMMFPADIDKYRLALTLIIAHQRLNRTEIPVNAELSAFHKQIRSTAERVITVNNDQKRRYYFARLLQELDQYQQKLVDYQAADAVIRPVKRLTEMLRKYQSALI</sequence>
<proteinExistence type="inferred from homology"/>
<feature type="chain" id="PRO_0000210087" description="p-hydroxybenzoic acid efflux pump subunit AaeB">
    <location>
        <begin position="1"/>
        <end position="651"/>
    </location>
</feature>
<feature type="transmembrane region" description="Helical" evidence="1">
    <location>
        <begin position="11"/>
        <end position="31"/>
    </location>
</feature>
<feature type="transmembrane region" description="Helical" evidence="1">
    <location>
        <begin position="41"/>
        <end position="61"/>
    </location>
</feature>
<feature type="transmembrane region" description="Helical" evidence="1">
    <location>
        <begin position="67"/>
        <end position="87"/>
    </location>
</feature>
<feature type="transmembrane region" description="Helical" evidence="1">
    <location>
        <begin position="91"/>
        <end position="111"/>
    </location>
</feature>
<feature type="transmembrane region" description="Helical" evidence="1">
    <location>
        <begin position="119"/>
        <end position="139"/>
    </location>
</feature>
<feature type="transmembrane region" description="Helical" evidence="1">
    <location>
        <begin position="150"/>
        <end position="170"/>
    </location>
</feature>
<feature type="transmembrane region" description="Helical" evidence="1">
    <location>
        <begin position="368"/>
        <end position="388"/>
    </location>
</feature>
<feature type="transmembrane region" description="Helical" evidence="1">
    <location>
        <begin position="405"/>
        <end position="425"/>
    </location>
</feature>
<feature type="transmembrane region" description="Helical" evidence="1">
    <location>
        <begin position="429"/>
        <end position="449"/>
    </location>
</feature>
<feature type="transmembrane region" description="Helical" evidence="1">
    <location>
        <begin position="455"/>
        <end position="475"/>
    </location>
</feature>
<feature type="transmembrane region" description="Helical" evidence="1">
    <location>
        <begin position="481"/>
        <end position="501"/>
    </location>
</feature>
<protein>
    <recommendedName>
        <fullName evidence="1">p-hydroxybenzoic acid efflux pump subunit AaeB</fullName>
        <shortName evidence="1">pHBA efflux pump protein B</shortName>
    </recommendedName>
</protein>